<keyword id="KW-0274">FAD</keyword>
<keyword id="KW-0285">Flavoprotein</keyword>
<keyword id="KW-0560">Oxidoreductase</keyword>
<keyword id="KW-1185">Reference proteome</keyword>
<dbReference type="EC" id="1.4.99.-" evidence="1"/>
<dbReference type="EMBL" id="CP000634">
    <property type="protein sequence ID" value="ACM39085.1"/>
    <property type="molecule type" value="Genomic_DNA"/>
</dbReference>
<dbReference type="RefSeq" id="WP_012654327.1">
    <property type="nucleotide sequence ID" value="NC_011988.1"/>
</dbReference>
<dbReference type="SMR" id="B9K2I7"/>
<dbReference type="STRING" id="311402.Avi_6079"/>
<dbReference type="KEGG" id="avi:Avi_6079"/>
<dbReference type="eggNOG" id="COG0665">
    <property type="taxonomic scope" value="Bacteria"/>
</dbReference>
<dbReference type="HOGENOM" id="CLU_007884_9_2_5"/>
<dbReference type="UniPathway" id="UPA00043">
    <property type="reaction ID" value="UER00498"/>
</dbReference>
<dbReference type="Proteomes" id="UP000001596">
    <property type="component" value="Chromosome 2"/>
</dbReference>
<dbReference type="GO" id="GO:0005737">
    <property type="term" value="C:cytoplasm"/>
    <property type="evidence" value="ECO:0007669"/>
    <property type="project" value="TreeGrafter"/>
</dbReference>
<dbReference type="GO" id="GO:0005886">
    <property type="term" value="C:plasma membrane"/>
    <property type="evidence" value="ECO:0007669"/>
    <property type="project" value="TreeGrafter"/>
</dbReference>
<dbReference type="GO" id="GO:0008718">
    <property type="term" value="F:D-amino-acid dehydrogenase activity"/>
    <property type="evidence" value="ECO:0007669"/>
    <property type="project" value="UniProtKB-UniRule"/>
</dbReference>
<dbReference type="GO" id="GO:0055130">
    <property type="term" value="P:D-alanine catabolic process"/>
    <property type="evidence" value="ECO:0007669"/>
    <property type="project" value="UniProtKB-UniPathway"/>
</dbReference>
<dbReference type="FunFam" id="3.50.50.60:FF:000020">
    <property type="entry name" value="D-amino acid dehydrogenase"/>
    <property type="match status" value="1"/>
</dbReference>
<dbReference type="Gene3D" id="3.30.9.10">
    <property type="entry name" value="D-Amino Acid Oxidase, subunit A, domain 2"/>
    <property type="match status" value="1"/>
</dbReference>
<dbReference type="Gene3D" id="3.50.50.60">
    <property type="entry name" value="FAD/NAD(P)-binding domain"/>
    <property type="match status" value="2"/>
</dbReference>
<dbReference type="HAMAP" id="MF_01202">
    <property type="entry name" value="DadA"/>
    <property type="match status" value="1"/>
</dbReference>
<dbReference type="InterPro" id="IPR023080">
    <property type="entry name" value="DadA"/>
</dbReference>
<dbReference type="InterPro" id="IPR006076">
    <property type="entry name" value="FAD-dep_OxRdtase"/>
</dbReference>
<dbReference type="InterPro" id="IPR036188">
    <property type="entry name" value="FAD/NAD-bd_sf"/>
</dbReference>
<dbReference type="NCBIfam" id="NF001933">
    <property type="entry name" value="PRK00711.1"/>
    <property type="match status" value="1"/>
</dbReference>
<dbReference type="PANTHER" id="PTHR13847:SF280">
    <property type="entry name" value="D-AMINO ACID DEHYDROGENASE"/>
    <property type="match status" value="1"/>
</dbReference>
<dbReference type="PANTHER" id="PTHR13847">
    <property type="entry name" value="SARCOSINE DEHYDROGENASE-RELATED"/>
    <property type="match status" value="1"/>
</dbReference>
<dbReference type="Pfam" id="PF01266">
    <property type="entry name" value="DAO"/>
    <property type="match status" value="1"/>
</dbReference>
<dbReference type="SUPFAM" id="SSF54373">
    <property type="entry name" value="FAD-linked reductases, C-terminal domain"/>
    <property type="match status" value="1"/>
</dbReference>
<dbReference type="SUPFAM" id="SSF51905">
    <property type="entry name" value="FAD/NAD(P)-binding domain"/>
    <property type="match status" value="1"/>
</dbReference>
<sequence>MKVTILGAGVIGVTSAYYLAKAGHEVTVIDRQTGPALETSFANAGEVSFGYCSPWAAPGIPQKALKWLFMEHAPLILRPKIDAAMLGWMLRMLSNCTSGRYAINKSRMLRLADYSRIALAQLRTETNIDYDQRMQGTLQLFRTQAQLDASAKDVKALAADGIPYEVLDREACIRVEPALAAARHKIVGGLLTPKDETGDCFKFTNQLAEKAASLGVVFDYGRSIERLVVSGGKVTGVVTDRGTETADAYVVALGSYSPLLLKPLGITLPVYPVKGYSLTIPIVDPSKSPESTVMDETYKIAITRLGDRIRVGGMAEISGYTNDLGAARRRTLEHSVTDLFPGGDMGRADFWSGLRPMTPDGTPVIGATGISNLYINSGHGTLGWTMSCGSGRLLSDIVSGRQTEIDNADLALSRYAAGRVG</sequence>
<accession>B9K2I7</accession>
<comment type="function">
    <text evidence="1">Oxidative deamination of D-amino acids.</text>
</comment>
<comment type="catalytic activity">
    <reaction evidence="1">
        <text>a D-alpha-amino acid + A + H2O = a 2-oxocarboxylate + AH2 + NH4(+)</text>
        <dbReference type="Rhea" id="RHEA:18125"/>
        <dbReference type="ChEBI" id="CHEBI:13193"/>
        <dbReference type="ChEBI" id="CHEBI:15377"/>
        <dbReference type="ChEBI" id="CHEBI:17499"/>
        <dbReference type="ChEBI" id="CHEBI:28938"/>
        <dbReference type="ChEBI" id="CHEBI:35179"/>
        <dbReference type="ChEBI" id="CHEBI:59871"/>
    </reaction>
</comment>
<comment type="cofactor">
    <cofactor evidence="1">
        <name>FAD</name>
        <dbReference type="ChEBI" id="CHEBI:57692"/>
    </cofactor>
</comment>
<comment type="pathway">
    <text>Amino-acid degradation; D-alanine degradation; NH(3) and pyruvate from D-alanine: step 1/1.</text>
</comment>
<comment type="similarity">
    <text evidence="1">Belongs to the DadA oxidoreductase family.</text>
</comment>
<protein>
    <recommendedName>
        <fullName evidence="1">D-amino acid dehydrogenase</fullName>
        <ecNumber evidence="1">1.4.99.-</ecNumber>
    </recommendedName>
</protein>
<reference key="1">
    <citation type="journal article" date="2009" name="J. Bacteriol.">
        <title>Genome sequences of three Agrobacterium biovars help elucidate the evolution of multichromosome genomes in bacteria.</title>
        <authorList>
            <person name="Slater S.C."/>
            <person name="Goldman B.S."/>
            <person name="Goodner B."/>
            <person name="Setubal J.C."/>
            <person name="Farrand S.K."/>
            <person name="Nester E.W."/>
            <person name="Burr T.J."/>
            <person name="Banta L."/>
            <person name="Dickerman A.W."/>
            <person name="Paulsen I."/>
            <person name="Otten L."/>
            <person name="Suen G."/>
            <person name="Welch R."/>
            <person name="Almeida N.F."/>
            <person name="Arnold F."/>
            <person name="Burton O.T."/>
            <person name="Du Z."/>
            <person name="Ewing A."/>
            <person name="Godsy E."/>
            <person name="Heisel S."/>
            <person name="Houmiel K.L."/>
            <person name="Jhaveri J."/>
            <person name="Lu J."/>
            <person name="Miller N.M."/>
            <person name="Norton S."/>
            <person name="Chen Q."/>
            <person name="Phoolcharoen W."/>
            <person name="Ohlin V."/>
            <person name="Ondrusek D."/>
            <person name="Pride N."/>
            <person name="Stricklin S.L."/>
            <person name="Sun J."/>
            <person name="Wheeler C."/>
            <person name="Wilson L."/>
            <person name="Zhu H."/>
            <person name="Wood D.W."/>
        </authorList>
    </citation>
    <scope>NUCLEOTIDE SEQUENCE [LARGE SCALE GENOMIC DNA]</scope>
    <source>
        <strain>ATCC BAA-846 / DSM 112012 / S4</strain>
    </source>
</reference>
<proteinExistence type="inferred from homology"/>
<name>DADA_ALLAM</name>
<evidence type="ECO:0000255" key="1">
    <source>
        <dbReference type="HAMAP-Rule" id="MF_01202"/>
    </source>
</evidence>
<gene>
    <name evidence="1" type="primary">dadA</name>
    <name type="ordered locus">Avi_6079</name>
</gene>
<organism>
    <name type="scientific">Allorhizobium ampelinum (strain ATCC BAA-846 / DSM 112012 / S4)</name>
    <name type="common">Agrobacterium vitis (strain S4)</name>
    <dbReference type="NCBI Taxonomy" id="311402"/>
    <lineage>
        <taxon>Bacteria</taxon>
        <taxon>Pseudomonadati</taxon>
        <taxon>Pseudomonadota</taxon>
        <taxon>Alphaproteobacteria</taxon>
        <taxon>Hyphomicrobiales</taxon>
        <taxon>Rhizobiaceae</taxon>
        <taxon>Rhizobium/Agrobacterium group</taxon>
        <taxon>Allorhizobium</taxon>
        <taxon>Allorhizobium ampelinum</taxon>
    </lineage>
</organism>
<feature type="chain" id="PRO_1000164637" description="D-amino acid dehydrogenase">
    <location>
        <begin position="1"/>
        <end position="421"/>
    </location>
</feature>
<feature type="binding site" evidence="1">
    <location>
        <begin position="3"/>
        <end position="17"/>
    </location>
    <ligand>
        <name>FAD</name>
        <dbReference type="ChEBI" id="CHEBI:57692"/>
    </ligand>
</feature>